<dbReference type="EMBL" id="CP000800">
    <property type="protein sequence ID" value="ABV20687.1"/>
    <property type="molecule type" value="Genomic_DNA"/>
</dbReference>
<dbReference type="KEGG" id="ecw:EcE24377A_3584"/>
<dbReference type="HOGENOM" id="CLU_051840_0_0_6"/>
<dbReference type="Proteomes" id="UP000001122">
    <property type="component" value="Chromosome"/>
</dbReference>
<dbReference type="GO" id="GO:0080146">
    <property type="term" value="F:L-cysteine desulfhydrase activity"/>
    <property type="evidence" value="ECO:0007669"/>
    <property type="project" value="TreeGrafter"/>
</dbReference>
<dbReference type="GO" id="GO:0019450">
    <property type="term" value="P:L-cysteine catabolic process to pyruvate"/>
    <property type="evidence" value="ECO:0007669"/>
    <property type="project" value="TreeGrafter"/>
</dbReference>
<dbReference type="HAMAP" id="MF_01845">
    <property type="entry name" value="UPF0597"/>
    <property type="match status" value="1"/>
</dbReference>
<dbReference type="InterPro" id="IPR005130">
    <property type="entry name" value="Ser_deHydtase-like_asu"/>
</dbReference>
<dbReference type="InterPro" id="IPR021144">
    <property type="entry name" value="UPF0597"/>
</dbReference>
<dbReference type="PANTHER" id="PTHR30501">
    <property type="entry name" value="UPF0597 PROTEIN YHAM"/>
    <property type="match status" value="1"/>
</dbReference>
<dbReference type="PANTHER" id="PTHR30501:SF2">
    <property type="entry name" value="UPF0597 PROTEIN YHAM"/>
    <property type="match status" value="1"/>
</dbReference>
<dbReference type="Pfam" id="PF03313">
    <property type="entry name" value="SDH_alpha"/>
    <property type="match status" value="1"/>
</dbReference>
<dbReference type="PIRSF" id="PIRSF006054">
    <property type="entry name" value="UCP006054"/>
    <property type="match status" value="1"/>
</dbReference>
<protein>
    <recommendedName>
        <fullName evidence="1">UPF0597 protein YhaM</fullName>
    </recommendedName>
</protein>
<reference key="1">
    <citation type="journal article" date="2008" name="J. Bacteriol.">
        <title>The pangenome structure of Escherichia coli: comparative genomic analysis of E. coli commensal and pathogenic isolates.</title>
        <authorList>
            <person name="Rasko D.A."/>
            <person name="Rosovitz M.J."/>
            <person name="Myers G.S.A."/>
            <person name="Mongodin E.F."/>
            <person name="Fricke W.F."/>
            <person name="Gajer P."/>
            <person name="Crabtree J."/>
            <person name="Sebaihia M."/>
            <person name="Thomson N.R."/>
            <person name="Chaudhuri R."/>
            <person name="Henderson I.R."/>
            <person name="Sperandio V."/>
            <person name="Ravel J."/>
        </authorList>
    </citation>
    <scope>NUCLEOTIDE SEQUENCE [LARGE SCALE GENOMIC DNA]</scope>
    <source>
        <strain>E24377A / ETEC</strain>
    </source>
</reference>
<evidence type="ECO:0000255" key="1">
    <source>
        <dbReference type="HAMAP-Rule" id="MF_01845"/>
    </source>
</evidence>
<gene>
    <name evidence="1" type="primary">yhaM</name>
    <name type="ordered locus">EcE24377A_3584</name>
</gene>
<sequence length="436" mass="45359">MFDSTLNPLWQRYILAVQEEVKPALGCTEPISLALAAAVAAAELEGPVERVEAWVSPNLMKNGLGVTVPGTGMVGLPIAAALGALGGNANAGLEVLKDATAQAIADAKALLAAGKVSVKIQEPCNEILFSRAKVWNGEKWACVTIVGGHTNIVHIETHNGVVFTQQACVAEGEQESPLTVLSRTTLAEILKFVNEVPFAAIRFILDSAKLNCALSQEGLSGKWGLHIGATLEKQCERGLLAKDLSSSIVIRTSAASDARMGGATLPAMSNSGSGNQGITATMPVVVVAEHFGADDERLARALMLSHLSAIYIHNQLPRLSALCAATTAAMGAAAGMAWLVDGRYETISMAISSMIGDVSGMICDGASNSCAMKVSTSASAAWKAVLMALDDTAVTGNEGIVAHDVEQSIANLCALASHSMQQTDRQIIEIMASKAR</sequence>
<proteinExistence type="inferred from homology"/>
<accession>A7ZS00</accession>
<organism>
    <name type="scientific">Escherichia coli O139:H28 (strain E24377A / ETEC)</name>
    <dbReference type="NCBI Taxonomy" id="331111"/>
    <lineage>
        <taxon>Bacteria</taxon>
        <taxon>Pseudomonadati</taxon>
        <taxon>Pseudomonadota</taxon>
        <taxon>Gammaproteobacteria</taxon>
        <taxon>Enterobacterales</taxon>
        <taxon>Enterobacteriaceae</taxon>
        <taxon>Escherichia</taxon>
    </lineage>
</organism>
<name>YHAM_ECO24</name>
<comment type="similarity">
    <text evidence="1">Belongs to the UPF0597 family.</text>
</comment>
<keyword id="KW-1185">Reference proteome</keyword>
<feature type="chain" id="PRO_0000339820" description="UPF0597 protein YhaM">
    <location>
        <begin position="1"/>
        <end position="436"/>
    </location>
</feature>